<proteinExistence type="inferred from homology"/>
<comment type="function">
    <text evidence="1">Divisome component that associates with the complex late in its assembly, after the Z-ring is formed, and is dependent on DivIC and PBP2B for its recruitment to the divisome. Together with EzrA, is a key component of the system that regulates PBP1 localization during cell cycle progression. Its main role could be the removal of PBP1 from the cell pole after pole maturation is completed. Also contributes to the recruitment of PBP1 to the division complex. Not essential for septum formation.</text>
</comment>
<comment type="subunit">
    <text evidence="1">Forms polymers through the coiled coil domains. Interacts with PBP1, MreC and EzrA.</text>
</comment>
<comment type="subcellular location">
    <subcellularLocation>
        <location evidence="1">Cytoplasm</location>
    </subcellularLocation>
    <text evidence="1">Shuttles between the lateral wall and the division site in a cell cycle-dependent manner.</text>
</comment>
<comment type="similarity">
    <text evidence="1">Belongs to the GpsB family.</text>
</comment>
<organism>
    <name type="scientific">Staphylococcus aureus (strain MW2)</name>
    <dbReference type="NCBI Taxonomy" id="196620"/>
    <lineage>
        <taxon>Bacteria</taxon>
        <taxon>Bacillati</taxon>
        <taxon>Bacillota</taxon>
        <taxon>Bacilli</taxon>
        <taxon>Bacillales</taxon>
        <taxon>Staphylococcaceae</taxon>
        <taxon>Staphylococcus</taxon>
    </lineage>
</organism>
<accession>Q7A0V6</accession>
<sequence>MSDVSLKLSAKDIYEKDFEKTMARGYRREEVDAFLDDIIADYQKMADMNNEVVKLSEENHKLKKELEELRLRVATSRPQDNKSFSSNNTTTNTSSNNVDILKRISNLEKAVFGK</sequence>
<dbReference type="EMBL" id="BA000033">
    <property type="protein sequence ID" value="BAB95200.1"/>
    <property type="molecule type" value="Genomic_DNA"/>
</dbReference>
<dbReference type="RefSeq" id="WP_001286320.1">
    <property type="nucleotide sequence ID" value="NC_003923.1"/>
</dbReference>
<dbReference type="SMR" id="Q7A0V6"/>
<dbReference type="GeneID" id="98345812"/>
<dbReference type="KEGG" id="sam:MW1335"/>
<dbReference type="HOGENOM" id="CLU_140309_1_0_9"/>
<dbReference type="GO" id="GO:0005737">
    <property type="term" value="C:cytoplasm"/>
    <property type="evidence" value="ECO:0007669"/>
    <property type="project" value="UniProtKB-SubCell"/>
</dbReference>
<dbReference type="GO" id="GO:0051301">
    <property type="term" value="P:cell division"/>
    <property type="evidence" value="ECO:0007669"/>
    <property type="project" value="UniProtKB-UniRule"/>
</dbReference>
<dbReference type="GO" id="GO:0008360">
    <property type="term" value="P:regulation of cell shape"/>
    <property type="evidence" value="ECO:0007669"/>
    <property type="project" value="UniProtKB-UniRule"/>
</dbReference>
<dbReference type="Gene3D" id="6.10.250.660">
    <property type="match status" value="1"/>
</dbReference>
<dbReference type="HAMAP" id="MF_02011">
    <property type="entry name" value="GpsB"/>
    <property type="match status" value="1"/>
</dbReference>
<dbReference type="InterPro" id="IPR011229">
    <property type="entry name" value="Cell_cycle_GpsB"/>
</dbReference>
<dbReference type="InterPro" id="IPR019933">
    <property type="entry name" value="DivIVA_domain"/>
</dbReference>
<dbReference type="InterPro" id="IPR007793">
    <property type="entry name" value="DivIVA_fam"/>
</dbReference>
<dbReference type="NCBIfam" id="TIGR03544">
    <property type="entry name" value="DivI1A_domain"/>
    <property type="match status" value="1"/>
</dbReference>
<dbReference type="NCBIfam" id="NF010725">
    <property type="entry name" value="PRK14127.1"/>
    <property type="match status" value="1"/>
</dbReference>
<dbReference type="PANTHER" id="PTHR35794:SF1">
    <property type="entry name" value="CELL CYCLE PROTEIN GPSB"/>
    <property type="match status" value="1"/>
</dbReference>
<dbReference type="PANTHER" id="PTHR35794">
    <property type="entry name" value="CELL DIVISION PROTEIN DIVIVA"/>
    <property type="match status" value="1"/>
</dbReference>
<dbReference type="Pfam" id="PF05103">
    <property type="entry name" value="DivIVA"/>
    <property type="match status" value="1"/>
</dbReference>
<dbReference type="PIRSF" id="PIRSF029938">
    <property type="entry name" value="UCP029938"/>
    <property type="match status" value="1"/>
</dbReference>
<name>GPSB_STAAW</name>
<evidence type="ECO:0000255" key="1">
    <source>
        <dbReference type="HAMAP-Rule" id="MF_02011"/>
    </source>
</evidence>
<evidence type="ECO:0000256" key="2">
    <source>
        <dbReference type="SAM" id="MobiDB-lite"/>
    </source>
</evidence>
<gene>
    <name evidence="1" type="primary">gpsB</name>
    <name type="ordered locus">MW1335</name>
</gene>
<reference key="1">
    <citation type="journal article" date="2002" name="Lancet">
        <title>Genome and virulence determinants of high virulence community-acquired MRSA.</title>
        <authorList>
            <person name="Baba T."/>
            <person name="Takeuchi F."/>
            <person name="Kuroda M."/>
            <person name="Yuzawa H."/>
            <person name="Aoki K."/>
            <person name="Oguchi A."/>
            <person name="Nagai Y."/>
            <person name="Iwama N."/>
            <person name="Asano K."/>
            <person name="Naimi T."/>
            <person name="Kuroda H."/>
            <person name="Cui L."/>
            <person name="Yamamoto K."/>
            <person name="Hiramatsu K."/>
        </authorList>
    </citation>
    <scope>NUCLEOTIDE SEQUENCE [LARGE SCALE GENOMIC DNA]</scope>
    <source>
        <strain>MW2</strain>
    </source>
</reference>
<protein>
    <recommendedName>
        <fullName evidence="1">Cell cycle protein GpsB</fullName>
    </recommendedName>
    <alternativeName>
        <fullName evidence="1">Guiding PBP1-shuttling protein</fullName>
    </alternativeName>
</protein>
<keyword id="KW-0131">Cell cycle</keyword>
<keyword id="KW-0132">Cell division</keyword>
<keyword id="KW-0133">Cell shape</keyword>
<keyword id="KW-0175">Coiled coil</keyword>
<keyword id="KW-0963">Cytoplasm</keyword>
<feature type="chain" id="PRO_0000337939" description="Cell cycle protein GpsB">
    <location>
        <begin position="1"/>
        <end position="114"/>
    </location>
</feature>
<feature type="region of interest" description="Disordered" evidence="2">
    <location>
        <begin position="74"/>
        <end position="99"/>
    </location>
</feature>
<feature type="coiled-coil region" evidence="1">
    <location>
        <begin position="42"/>
        <end position="77"/>
    </location>
</feature>
<feature type="compositionally biased region" description="Low complexity" evidence="2">
    <location>
        <begin position="85"/>
        <end position="97"/>
    </location>
</feature>